<keyword id="KW-1216">Complement system impairing toxin</keyword>
<keyword id="KW-1015">Disulfide bond</keyword>
<keyword id="KW-1199">Hemostasis impairing toxin</keyword>
<keyword id="KW-0379">Hydroxylation</keyword>
<keyword id="KW-0964">Secreted</keyword>
<keyword id="KW-0732">Signal</keyword>
<keyword id="KW-0800">Toxin</keyword>
<evidence type="ECO:0000250" key="1"/>
<evidence type="ECO:0000255" key="2"/>
<evidence type="ECO:0000255" key="3">
    <source>
        <dbReference type="PROSITE-ProRule" id="PRU00739"/>
    </source>
</evidence>
<evidence type="ECO:0000256" key="4">
    <source>
        <dbReference type="SAM" id="MobiDB-lite"/>
    </source>
</evidence>
<evidence type="ECO:0000305" key="5"/>
<proteinExistence type="evidence at protein level"/>
<organism>
    <name type="scientific">Cerberus rynchops</name>
    <name type="common">Dog-faced water snake</name>
    <dbReference type="NCBI Taxonomy" id="46267"/>
    <lineage>
        <taxon>Eukaryota</taxon>
        <taxon>Metazoa</taxon>
        <taxon>Chordata</taxon>
        <taxon>Craniata</taxon>
        <taxon>Vertebrata</taxon>
        <taxon>Euteleostomi</taxon>
        <taxon>Lepidosauria</taxon>
        <taxon>Squamata</taxon>
        <taxon>Bifurcata</taxon>
        <taxon>Unidentata</taxon>
        <taxon>Episquamata</taxon>
        <taxon>Toxicofera</taxon>
        <taxon>Serpentes</taxon>
        <taxon>Colubroidea</taxon>
        <taxon>Homalopsidae</taxon>
        <taxon>Cerberus</taxon>
    </lineage>
</organism>
<feature type="signal peptide" evidence="2">
    <location>
        <begin position="1"/>
        <end position="19"/>
    </location>
</feature>
<feature type="chain" id="PRO_0000414920" description="Ryncolin-3">
    <location>
        <begin position="20"/>
        <end position="347"/>
    </location>
</feature>
<feature type="domain" description="Collagen-like">
    <location>
        <begin position="57"/>
        <end position="114"/>
    </location>
</feature>
<feature type="domain" description="Fibrinogen C-terminal" evidence="3">
    <location>
        <begin position="121"/>
        <end position="341"/>
    </location>
</feature>
<feature type="region of interest" description="Disordered" evidence="4">
    <location>
        <begin position="62"/>
        <end position="115"/>
    </location>
</feature>
<feature type="compositionally biased region" description="Basic and acidic residues" evidence="4">
    <location>
        <begin position="95"/>
        <end position="115"/>
    </location>
</feature>
<feature type="disulfide bond" evidence="3">
    <location>
        <begin position="132"/>
        <end position="160"/>
    </location>
</feature>
<feature type="disulfide bond" evidence="3">
    <location>
        <begin position="284"/>
        <end position="297"/>
    </location>
</feature>
<reference key="1">
    <citation type="journal article" date="2010" name="J. Proteome Res.">
        <title>Identification of a novel family of snake venom proteins Veficolins from Cerberus rynchops using a venom gland transcriptomics and proteomics approach.</title>
        <authorList>
            <person name="Ompraba G."/>
            <person name="Chapeaurouge A."/>
            <person name="Doley R."/>
            <person name="Devi K.R."/>
            <person name="Padmanaban P."/>
            <person name="Venkatraman C."/>
            <person name="Velmurugan D."/>
            <person name="Lin Q."/>
            <person name="Kini R.M."/>
        </authorList>
    </citation>
    <scope>NUCLEOTIDE SEQUENCE [MRNA]</scope>
    <scope>IDENTIFICATION BY MASS SPECTROMETRY</scope>
    <scope>HYDROXYLATION</scope>
    <source>
        <tissue>Venom</tissue>
        <tissue>Venom gland</tissue>
    </source>
</reference>
<dbReference type="EMBL" id="GU065325">
    <property type="protein sequence ID" value="ADJ51064.1"/>
    <property type="molecule type" value="mRNA"/>
</dbReference>
<dbReference type="SMR" id="D8VNS9"/>
<dbReference type="GO" id="GO:0005615">
    <property type="term" value="C:extracellular space"/>
    <property type="evidence" value="ECO:0007669"/>
    <property type="project" value="TreeGrafter"/>
</dbReference>
<dbReference type="GO" id="GO:0003823">
    <property type="term" value="F:antigen binding"/>
    <property type="evidence" value="ECO:0007669"/>
    <property type="project" value="TreeGrafter"/>
</dbReference>
<dbReference type="GO" id="GO:0097367">
    <property type="term" value="F:carbohydrate derivative binding"/>
    <property type="evidence" value="ECO:0007669"/>
    <property type="project" value="TreeGrafter"/>
</dbReference>
<dbReference type="GO" id="GO:0005102">
    <property type="term" value="F:signaling receptor binding"/>
    <property type="evidence" value="ECO:0007669"/>
    <property type="project" value="TreeGrafter"/>
</dbReference>
<dbReference type="GO" id="GO:0090729">
    <property type="term" value="F:toxin activity"/>
    <property type="evidence" value="ECO:0007669"/>
    <property type="project" value="UniProtKB-KW"/>
</dbReference>
<dbReference type="GO" id="GO:0001867">
    <property type="term" value="P:complement activation, lectin pathway"/>
    <property type="evidence" value="ECO:0007669"/>
    <property type="project" value="TreeGrafter"/>
</dbReference>
<dbReference type="CDD" id="cd00087">
    <property type="entry name" value="FReD"/>
    <property type="match status" value="1"/>
</dbReference>
<dbReference type="FunFam" id="3.90.215.10:FF:000001">
    <property type="entry name" value="Tenascin isoform 1"/>
    <property type="match status" value="1"/>
</dbReference>
<dbReference type="Gene3D" id="3.90.215.10">
    <property type="entry name" value="Gamma Fibrinogen, chain A, domain 1"/>
    <property type="match status" value="1"/>
</dbReference>
<dbReference type="InterPro" id="IPR008160">
    <property type="entry name" value="Collagen"/>
</dbReference>
<dbReference type="InterPro" id="IPR036056">
    <property type="entry name" value="Fibrinogen-like_C"/>
</dbReference>
<dbReference type="InterPro" id="IPR014716">
    <property type="entry name" value="Fibrinogen_a/b/g_C_1"/>
</dbReference>
<dbReference type="InterPro" id="IPR002181">
    <property type="entry name" value="Fibrinogen_a/b/g_C_dom"/>
</dbReference>
<dbReference type="InterPro" id="IPR050373">
    <property type="entry name" value="Fibrinogen_C-term_domain"/>
</dbReference>
<dbReference type="InterPro" id="IPR020837">
    <property type="entry name" value="Fibrinogen_CS"/>
</dbReference>
<dbReference type="NCBIfam" id="NF040941">
    <property type="entry name" value="GGGWT_bact"/>
    <property type="match status" value="1"/>
</dbReference>
<dbReference type="PANTHER" id="PTHR19143">
    <property type="entry name" value="FIBRINOGEN/TENASCIN/ANGIOPOEITIN"/>
    <property type="match status" value="1"/>
</dbReference>
<dbReference type="PANTHER" id="PTHR19143:SF415">
    <property type="entry name" value="FICOLIN-3"/>
    <property type="match status" value="1"/>
</dbReference>
<dbReference type="Pfam" id="PF01391">
    <property type="entry name" value="Collagen"/>
    <property type="match status" value="1"/>
</dbReference>
<dbReference type="Pfam" id="PF00147">
    <property type="entry name" value="Fibrinogen_C"/>
    <property type="match status" value="1"/>
</dbReference>
<dbReference type="SMART" id="SM00186">
    <property type="entry name" value="FBG"/>
    <property type="match status" value="1"/>
</dbReference>
<dbReference type="SUPFAM" id="SSF56496">
    <property type="entry name" value="Fibrinogen C-terminal domain-like"/>
    <property type="match status" value="1"/>
</dbReference>
<dbReference type="PROSITE" id="PS00514">
    <property type="entry name" value="FIBRINOGEN_C_1"/>
    <property type="match status" value="1"/>
</dbReference>
<dbReference type="PROSITE" id="PS51406">
    <property type="entry name" value="FIBRINOGEN_C_2"/>
    <property type="match status" value="1"/>
</dbReference>
<sequence length="347" mass="38443">MKPWAAFHLIFLVASSVEGDVSNYGTGGTQDTEPTCCTEHQCISDKIILQGQPGIPGIPGVPGINGSEGLKGDPGPQGLPGETGFDGIPGVAGPKGDKGDQGDKGDKGDKGDKGDACILDDCPPTDVEVRNCQDLLEHGEILNGWYTIYPTKENPMVVFCDMETDGGGWLVFQRRQDGSVDFYLDWESYKKGFGKQESEFWLGNDKIHLLTSSGTQQLRIDLEDFEGSRTFAKYSSFSIGDENEKYRLIVGSYLDGSMNDSFRIHNGHSFSTKDRDNDTNKGNCAMMYKGAWWYFHCHHANLNGLYYKGKHANYADGINWRSGKGYYYSYKYADMKIRPQQSETTVS</sequence>
<accession>D8VNS9</accession>
<name>FCNV3_CERRY</name>
<protein>
    <recommendedName>
        <fullName>Ryncolin-3</fullName>
    </recommendedName>
</protein>
<comment type="function">
    <text evidence="1">Initiates complement activation and/or interferes in platelet aggregation and/or blood coagulation.</text>
</comment>
<comment type="subcellular location">
    <subcellularLocation>
        <location>Secreted</location>
    </subcellularLocation>
</comment>
<comment type="tissue specificity">
    <text>Expressed by the venom duct.</text>
</comment>
<comment type="PTM">
    <text evidence="1">Hydroxylated.</text>
</comment>
<comment type="similarity">
    <text evidence="5">Belongs to the ficolin lectin family. Veficolin subfamily.</text>
</comment>